<proteinExistence type="evidence at protein level"/>
<feature type="transit peptide" description="Chloroplast" evidence="2">
    <location>
        <begin position="1" status="less than"/>
        <end position="24"/>
    </location>
</feature>
<feature type="chain" id="PRO_0000398171" description="R-linalool synthase QH1, chloroplastic">
    <location>
        <begin position="25"/>
        <end position="567"/>
    </location>
</feature>
<feature type="short sequence motif" description="DDXXD motif" evidence="1">
    <location>
        <begin position="319"/>
        <end position="323"/>
    </location>
</feature>
<feature type="binding site" evidence="1">
    <location>
        <position position="282"/>
    </location>
    <ligand>
        <name>(2E)-geranyl diphosphate</name>
        <dbReference type="ChEBI" id="CHEBI:58057"/>
    </ligand>
</feature>
<feature type="binding site" evidence="1">
    <location>
        <position position="319"/>
    </location>
    <ligand>
        <name>(2E)-geranyl diphosphate</name>
        <dbReference type="ChEBI" id="CHEBI:58057"/>
    </ligand>
</feature>
<feature type="binding site" evidence="1">
    <location>
        <position position="319"/>
    </location>
    <ligand>
        <name>Mg(2+)</name>
        <dbReference type="ChEBI" id="CHEBI:18420"/>
        <label>1</label>
    </ligand>
</feature>
<feature type="binding site" evidence="1">
    <location>
        <position position="319"/>
    </location>
    <ligand>
        <name>Mg(2+)</name>
        <dbReference type="ChEBI" id="CHEBI:18420"/>
        <label>2</label>
    </ligand>
</feature>
<feature type="binding site" evidence="1">
    <location>
        <position position="323"/>
    </location>
    <ligand>
        <name>(2E)-geranyl diphosphate</name>
        <dbReference type="ChEBI" id="CHEBI:58057"/>
    </ligand>
</feature>
<feature type="binding site" evidence="1">
    <location>
        <position position="323"/>
    </location>
    <ligand>
        <name>Mg(2+)</name>
        <dbReference type="ChEBI" id="CHEBI:18420"/>
        <label>1</label>
    </ligand>
</feature>
<feature type="binding site" evidence="1">
    <location>
        <position position="323"/>
    </location>
    <ligand>
        <name>Mg(2+)</name>
        <dbReference type="ChEBI" id="CHEBI:18420"/>
        <label>2</label>
    </ligand>
</feature>
<feature type="binding site" evidence="1">
    <location>
        <position position="460"/>
    </location>
    <ligand>
        <name>(2E)-geranyl diphosphate</name>
        <dbReference type="ChEBI" id="CHEBI:58057"/>
    </ligand>
</feature>
<feature type="binding site" evidence="1">
    <location>
        <position position="463"/>
    </location>
    <ligand>
        <name>(2E)-geranyl diphosphate</name>
        <dbReference type="ChEBI" id="CHEBI:58057"/>
    </ligand>
</feature>
<feature type="binding site" evidence="1">
    <location>
        <position position="463"/>
    </location>
    <ligand>
        <name>Mg(2+)</name>
        <dbReference type="ChEBI" id="CHEBI:18420"/>
        <label>3</label>
    </ligand>
</feature>
<feature type="binding site" evidence="1">
    <location>
        <position position="467"/>
    </location>
    <ligand>
        <name>Mg(2+)</name>
        <dbReference type="ChEBI" id="CHEBI:18420"/>
        <label>3</label>
    </ligand>
</feature>
<feature type="binding site" evidence="1">
    <location>
        <position position="471"/>
    </location>
    <ligand>
        <name>Mg(2+)</name>
        <dbReference type="ChEBI" id="CHEBI:18420"/>
        <label>3</label>
    </ligand>
</feature>
<feature type="non-terminal residue">
    <location>
        <position position="1"/>
    </location>
</feature>
<name>LLOS1_ARTAN</name>
<evidence type="ECO:0000250" key="1">
    <source>
        <dbReference type="UniProtKB" id="Q40577"/>
    </source>
</evidence>
<evidence type="ECO:0000255" key="2"/>
<evidence type="ECO:0000269" key="3">
    <source>
    </source>
</evidence>
<evidence type="ECO:0000305" key="4"/>
<evidence type="ECO:0000305" key="5">
    <source>
    </source>
</evidence>
<accession>Q9SPN0</accession>
<protein>
    <recommendedName>
        <fullName>R-linalool synthase QH1, chloroplastic</fullName>
        <ecNumber evidence="3">4.2.3.26</ecNumber>
    </recommendedName>
</protein>
<comment type="function">
    <text evidence="3">Monoterpene synthase that catalyzes the formation of (3R)-linalool from geranyl diphosphate, but not from isopentenyl diphosphate, dimethylallyl diphosphate, chrysanthemyl diphosphate, farnesyl diphosphate, (+)-copalyl diphosphate or geranylgeranyl diphosphate.</text>
</comment>
<comment type="catalytic activity">
    <reaction evidence="3">
        <text>(2E)-geranyl diphosphate + H2O = (R)-linalool + diphosphate</text>
        <dbReference type="Rhea" id="RHEA:15809"/>
        <dbReference type="ChEBI" id="CHEBI:28"/>
        <dbReference type="ChEBI" id="CHEBI:15377"/>
        <dbReference type="ChEBI" id="CHEBI:33019"/>
        <dbReference type="ChEBI" id="CHEBI:58057"/>
        <dbReference type="EC" id="4.2.3.26"/>
    </reaction>
</comment>
<comment type="cofactor">
    <cofactor evidence="5">
        <name>Mg(2+)</name>
        <dbReference type="ChEBI" id="CHEBI:18420"/>
    </cofactor>
    <text evidence="5">Binds 3 Mg(2+) ions per subunit.</text>
</comment>
<comment type="biophysicochemical properties">
    <kinetics>
        <KM evidence="3">64 uM for geranyl diphosphate</KM>
        <KM evidence="3">4.6 mM for magnesium</KM>
    </kinetics>
</comment>
<comment type="pathway">
    <text>Secondary metabolite biosynthesis; terpenoid biosynthesis.</text>
</comment>
<comment type="subcellular location">
    <subcellularLocation>
        <location evidence="2">Plastid</location>
        <location evidence="2">Chloroplast</location>
    </subcellularLocation>
</comment>
<comment type="tissue specificity">
    <text evidence="3">Highly expressed in leaves and lower levels in inflorescences. Not detected in stems, stem epidermis, stem stele or roots.</text>
</comment>
<comment type="induction">
    <text evidence="3">By wounding.</text>
</comment>
<comment type="domain">
    <text evidence="1">The Asp-Asp-Xaa-Xaa-Asp/Glu (DDXXD/E) motif is important for the catalytic activity, presumably through binding to Mg(2+).</text>
</comment>
<comment type="similarity">
    <text evidence="4">Belongs to the terpene synthase family. Tpsb subfamily.</text>
</comment>
<keyword id="KW-0150">Chloroplast</keyword>
<keyword id="KW-0456">Lyase</keyword>
<keyword id="KW-0460">Magnesium</keyword>
<keyword id="KW-0479">Metal-binding</keyword>
<keyword id="KW-0934">Plastid</keyword>
<keyword id="KW-0809">Transit peptide</keyword>
<gene>
    <name type="primary">QH1</name>
</gene>
<dbReference type="EC" id="4.2.3.26" evidence="3"/>
<dbReference type="EMBL" id="AF154125">
    <property type="protein sequence ID" value="AAF13357.1"/>
    <property type="molecule type" value="mRNA"/>
</dbReference>
<dbReference type="SMR" id="Q9SPN0"/>
<dbReference type="KEGG" id="ag:AAF13357"/>
<dbReference type="SABIO-RK" id="Q9SPN0"/>
<dbReference type="UniPathway" id="UPA00213"/>
<dbReference type="GO" id="GO:0009507">
    <property type="term" value="C:chloroplast"/>
    <property type="evidence" value="ECO:0007669"/>
    <property type="project" value="UniProtKB-SubCell"/>
</dbReference>
<dbReference type="GO" id="GO:0000287">
    <property type="term" value="F:magnesium ion binding"/>
    <property type="evidence" value="ECO:0000314"/>
    <property type="project" value="UniProtKB"/>
</dbReference>
<dbReference type="GO" id="GO:0034008">
    <property type="term" value="F:R-linalool synthase activity"/>
    <property type="evidence" value="ECO:0000314"/>
    <property type="project" value="UniProtKB"/>
</dbReference>
<dbReference type="GO" id="GO:0010333">
    <property type="term" value="F:terpene synthase activity"/>
    <property type="evidence" value="ECO:0007669"/>
    <property type="project" value="InterPro"/>
</dbReference>
<dbReference type="GO" id="GO:0016102">
    <property type="term" value="P:diterpenoid biosynthetic process"/>
    <property type="evidence" value="ECO:0007669"/>
    <property type="project" value="InterPro"/>
</dbReference>
<dbReference type="GO" id="GO:0033383">
    <property type="term" value="P:geranyl diphosphate metabolic process"/>
    <property type="evidence" value="ECO:0000314"/>
    <property type="project" value="UniProtKB"/>
</dbReference>
<dbReference type="GO" id="GO:0009611">
    <property type="term" value="P:response to wounding"/>
    <property type="evidence" value="ECO:0000270"/>
    <property type="project" value="UniProtKB"/>
</dbReference>
<dbReference type="CDD" id="cd00684">
    <property type="entry name" value="Terpene_cyclase_plant_C1"/>
    <property type="match status" value="1"/>
</dbReference>
<dbReference type="FunFam" id="1.10.600.10:FF:000007">
    <property type="entry name" value="Isoprene synthase, chloroplastic"/>
    <property type="match status" value="1"/>
</dbReference>
<dbReference type="FunFam" id="1.50.10.130:FF:000001">
    <property type="entry name" value="Isoprene synthase, chloroplastic"/>
    <property type="match status" value="1"/>
</dbReference>
<dbReference type="Gene3D" id="1.10.600.10">
    <property type="entry name" value="Farnesyl Diphosphate Synthase"/>
    <property type="match status" value="1"/>
</dbReference>
<dbReference type="Gene3D" id="1.50.10.130">
    <property type="entry name" value="Terpene synthase, N-terminal domain"/>
    <property type="match status" value="1"/>
</dbReference>
<dbReference type="InterPro" id="IPR008949">
    <property type="entry name" value="Isoprenoid_synthase_dom_sf"/>
</dbReference>
<dbReference type="InterPro" id="IPR034741">
    <property type="entry name" value="Terpene_cyclase-like_1_C"/>
</dbReference>
<dbReference type="InterPro" id="IPR044814">
    <property type="entry name" value="Terpene_cyclase_plant_C1"/>
</dbReference>
<dbReference type="InterPro" id="IPR001906">
    <property type="entry name" value="Terpene_synth_N"/>
</dbReference>
<dbReference type="InterPro" id="IPR036965">
    <property type="entry name" value="Terpene_synth_N_sf"/>
</dbReference>
<dbReference type="InterPro" id="IPR050148">
    <property type="entry name" value="Terpene_synthase-like"/>
</dbReference>
<dbReference type="InterPro" id="IPR005630">
    <property type="entry name" value="Terpene_synthase_metal-bd"/>
</dbReference>
<dbReference type="InterPro" id="IPR008930">
    <property type="entry name" value="Terpenoid_cyclase/PrenylTrfase"/>
</dbReference>
<dbReference type="PANTHER" id="PTHR31225">
    <property type="entry name" value="OS04G0344100 PROTEIN-RELATED"/>
    <property type="match status" value="1"/>
</dbReference>
<dbReference type="PANTHER" id="PTHR31225:SF9">
    <property type="entry name" value="TERPENE SYNTHASE 10"/>
    <property type="match status" value="1"/>
</dbReference>
<dbReference type="Pfam" id="PF01397">
    <property type="entry name" value="Terpene_synth"/>
    <property type="match status" value="1"/>
</dbReference>
<dbReference type="Pfam" id="PF03936">
    <property type="entry name" value="Terpene_synth_C"/>
    <property type="match status" value="1"/>
</dbReference>
<dbReference type="SFLD" id="SFLDS00005">
    <property type="entry name" value="Isoprenoid_Synthase_Type_I"/>
    <property type="match status" value="1"/>
</dbReference>
<dbReference type="SFLD" id="SFLDG01019">
    <property type="entry name" value="Terpene_Cyclase_Like_1_C_Termi"/>
    <property type="match status" value="1"/>
</dbReference>
<dbReference type="SUPFAM" id="SSF48239">
    <property type="entry name" value="Terpenoid cyclases/Protein prenyltransferases"/>
    <property type="match status" value="1"/>
</dbReference>
<dbReference type="SUPFAM" id="SSF48576">
    <property type="entry name" value="Terpenoid synthases"/>
    <property type="match status" value="1"/>
</dbReference>
<organism>
    <name type="scientific">Artemisia annua</name>
    <name type="common">Sweet wormwood</name>
    <dbReference type="NCBI Taxonomy" id="35608"/>
    <lineage>
        <taxon>Eukaryota</taxon>
        <taxon>Viridiplantae</taxon>
        <taxon>Streptophyta</taxon>
        <taxon>Embryophyta</taxon>
        <taxon>Tracheophyta</taxon>
        <taxon>Spermatophyta</taxon>
        <taxon>Magnoliopsida</taxon>
        <taxon>eudicotyledons</taxon>
        <taxon>Gunneridae</taxon>
        <taxon>Pentapetalae</taxon>
        <taxon>asterids</taxon>
        <taxon>campanulids</taxon>
        <taxon>Asterales</taxon>
        <taxon>Asteraceae</taxon>
        <taxon>Asteroideae</taxon>
        <taxon>Anthemideae</taxon>
        <taxon>Artemisiinae</taxon>
        <taxon>Artemisia</taxon>
    </lineage>
</organism>
<sequence>GNAYMRIYSTKTTRITANATVNAADTHVRRSANYKPSSWSFDHIQSLSSKYTGDDYVARANTLKDAVKTMIRKSGNSLRTLELVDELQRLGISYLFEEEISNLLETIYYNYYKFPENWNKINLNLKALGFRLLRQHGYHVPQEIFLNFKDKNQNLNSYLLNDVVEMLNLYEASYHSFEDESILDDARDITTKYLKESLEKIDGSIFSSVTHALEQPLHWRVPRVEAKWFIELYEKKNGMSPTLVELAKLDFDMVQAIHLEDLKHASRWWRDTSWDTKLTFARDLIVENFLWTIGFSYLPNFSRGRRTITKVAVMITTLDDVYDVFGTLGELEQFTDVINRWDIKAIEQLPDYMKICFLGLYKSINDITHETLANKGFLILPYLKKAWADLCKAYLVEAQWYHRGHIPTLNEYLDNACVSISGPVALMHVHFLTSVSSIEEIHQCIQRTENIVHYVSLIFRLADDLGTSLGEMERGDTLKSIQLHMHETGATEPEARSYIKLLINKTWKKLNKERATVNSESSQEFIDYATNLVRMAQFMYGEGDEDFGLDVIKSHVLSLLFTPIQGI</sequence>
<reference key="1">
    <citation type="journal article" date="1999" name="Arch. Biochem. Biophys.">
        <title>(3R)-Linalool synthase from Artemisia annua L.: cDNA isolation, characterization, and wound induction.</title>
        <authorList>
            <person name="Jia J.W."/>
            <person name="Crock J."/>
            <person name="Lu S."/>
            <person name="Croteau R."/>
            <person name="Chen X.Y."/>
        </authorList>
    </citation>
    <scope>NUCLEOTIDE SEQUENCE [MRNA]</scope>
    <scope>FUNCTION</scope>
    <scope>CATALYTIC ACTIVITY</scope>
    <scope>BIOPHYSICOCHEMICAL PROPERTIES</scope>
    <scope>COFACTOR</scope>
    <scope>TISSUE SPECIFICITY</scope>
    <scope>INDUCTION BY WOUNDING</scope>
</reference>